<proteinExistence type="inferred from homology"/>
<accession>C4LA08</accession>
<gene>
    <name evidence="1" type="primary">secB</name>
    <name type="ordered locus">Tola_0508</name>
</gene>
<evidence type="ECO:0000255" key="1">
    <source>
        <dbReference type="HAMAP-Rule" id="MF_00821"/>
    </source>
</evidence>
<reference key="1">
    <citation type="submission" date="2009-05" db="EMBL/GenBank/DDBJ databases">
        <title>Complete sequence of Tolumonas auensis DSM 9187.</title>
        <authorList>
            <consortium name="US DOE Joint Genome Institute"/>
            <person name="Lucas S."/>
            <person name="Copeland A."/>
            <person name="Lapidus A."/>
            <person name="Glavina del Rio T."/>
            <person name="Tice H."/>
            <person name="Bruce D."/>
            <person name="Goodwin L."/>
            <person name="Pitluck S."/>
            <person name="Chertkov O."/>
            <person name="Brettin T."/>
            <person name="Detter J.C."/>
            <person name="Han C."/>
            <person name="Larimer F."/>
            <person name="Land M."/>
            <person name="Hauser L."/>
            <person name="Kyrpides N."/>
            <person name="Mikhailova N."/>
            <person name="Spring S."/>
            <person name="Beller H."/>
        </authorList>
    </citation>
    <scope>NUCLEOTIDE SEQUENCE [LARGE SCALE GENOMIC DNA]</scope>
    <source>
        <strain>DSM 9187 / NBRC 110442 / TA 4</strain>
    </source>
</reference>
<feature type="chain" id="PRO_1000213112" description="Protein-export protein SecB">
    <location>
        <begin position="1"/>
        <end position="157"/>
    </location>
</feature>
<comment type="function">
    <text evidence="1">One of the proteins required for the normal export of preproteins out of the cell cytoplasm. It is a molecular chaperone that binds to a subset of precursor proteins, maintaining them in a translocation-competent state. It also specifically binds to its receptor SecA.</text>
</comment>
<comment type="subunit">
    <text evidence="1">Homotetramer, a dimer of dimers. One homotetramer interacts with 1 SecA dimer.</text>
</comment>
<comment type="subcellular location">
    <subcellularLocation>
        <location evidence="1">Cytoplasm</location>
    </subcellularLocation>
</comment>
<comment type="similarity">
    <text evidence="1">Belongs to the SecB family.</text>
</comment>
<sequence>MTEAANSTPAQPEFQIQRIYVKDVSFEAPNTPVVFQKEWQPEIKLDMDTQTQVLGQDVYEVALTLTVTCKLGEETAFLCEVKQAGIFTAANLDAQNLAHCLGAFCPNILFPYARETVAGLVSRGSFPQLNLAPVNFDALFASHIAQLEAEQAKAGVQ</sequence>
<keyword id="KW-0143">Chaperone</keyword>
<keyword id="KW-0963">Cytoplasm</keyword>
<keyword id="KW-0653">Protein transport</keyword>
<keyword id="KW-1185">Reference proteome</keyword>
<keyword id="KW-0811">Translocation</keyword>
<keyword id="KW-0813">Transport</keyword>
<dbReference type="EMBL" id="CP001616">
    <property type="protein sequence ID" value="ACQ92137.1"/>
    <property type="molecule type" value="Genomic_DNA"/>
</dbReference>
<dbReference type="RefSeq" id="WP_012728736.1">
    <property type="nucleotide sequence ID" value="NC_012691.1"/>
</dbReference>
<dbReference type="SMR" id="C4LA08"/>
<dbReference type="STRING" id="595494.Tola_0508"/>
<dbReference type="KEGG" id="tau:Tola_0508"/>
<dbReference type="eggNOG" id="COG1952">
    <property type="taxonomic scope" value="Bacteria"/>
</dbReference>
<dbReference type="HOGENOM" id="CLU_111574_1_0_6"/>
<dbReference type="OrthoDB" id="9795145at2"/>
<dbReference type="Proteomes" id="UP000009073">
    <property type="component" value="Chromosome"/>
</dbReference>
<dbReference type="GO" id="GO:0005737">
    <property type="term" value="C:cytoplasm"/>
    <property type="evidence" value="ECO:0007669"/>
    <property type="project" value="UniProtKB-SubCell"/>
</dbReference>
<dbReference type="GO" id="GO:0051082">
    <property type="term" value="F:unfolded protein binding"/>
    <property type="evidence" value="ECO:0007669"/>
    <property type="project" value="InterPro"/>
</dbReference>
<dbReference type="GO" id="GO:0006457">
    <property type="term" value="P:protein folding"/>
    <property type="evidence" value="ECO:0007669"/>
    <property type="project" value="UniProtKB-UniRule"/>
</dbReference>
<dbReference type="GO" id="GO:0051262">
    <property type="term" value="P:protein tetramerization"/>
    <property type="evidence" value="ECO:0007669"/>
    <property type="project" value="InterPro"/>
</dbReference>
<dbReference type="GO" id="GO:0015031">
    <property type="term" value="P:protein transport"/>
    <property type="evidence" value="ECO:0007669"/>
    <property type="project" value="UniProtKB-UniRule"/>
</dbReference>
<dbReference type="Gene3D" id="3.10.420.10">
    <property type="entry name" value="SecB-like"/>
    <property type="match status" value="1"/>
</dbReference>
<dbReference type="HAMAP" id="MF_00821">
    <property type="entry name" value="SecB"/>
    <property type="match status" value="1"/>
</dbReference>
<dbReference type="InterPro" id="IPR003708">
    <property type="entry name" value="SecB"/>
</dbReference>
<dbReference type="InterPro" id="IPR035958">
    <property type="entry name" value="SecB-like_sf"/>
</dbReference>
<dbReference type="NCBIfam" id="NF004393">
    <property type="entry name" value="PRK05751.1-4"/>
    <property type="match status" value="1"/>
</dbReference>
<dbReference type="NCBIfam" id="TIGR00809">
    <property type="entry name" value="secB"/>
    <property type="match status" value="1"/>
</dbReference>
<dbReference type="PANTHER" id="PTHR36918">
    <property type="match status" value="1"/>
</dbReference>
<dbReference type="PANTHER" id="PTHR36918:SF1">
    <property type="entry name" value="PROTEIN-EXPORT PROTEIN SECB"/>
    <property type="match status" value="1"/>
</dbReference>
<dbReference type="Pfam" id="PF02556">
    <property type="entry name" value="SecB"/>
    <property type="match status" value="1"/>
</dbReference>
<dbReference type="PRINTS" id="PR01594">
    <property type="entry name" value="SECBCHAPRONE"/>
</dbReference>
<dbReference type="SUPFAM" id="SSF54611">
    <property type="entry name" value="SecB-like"/>
    <property type="match status" value="1"/>
</dbReference>
<protein>
    <recommendedName>
        <fullName evidence="1">Protein-export protein SecB</fullName>
    </recommendedName>
</protein>
<organism>
    <name type="scientific">Tolumonas auensis (strain DSM 9187 / NBRC 110442 / TA 4)</name>
    <dbReference type="NCBI Taxonomy" id="595494"/>
    <lineage>
        <taxon>Bacteria</taxon>
        <taxon>Pseudomonadati</taxon>
        <taxon>Pseudomonadota</taxon>
        <taxon>Gammaproteobacteria</taxon>
        <taxon>Aeromonadales</taxon>
        <taxon>Aeromonadaceae</taxon>
        <taxon>Tolumonas</taxon>
    </lineage>
</organism>
<name>SECB_TOLAT</name>